<gene>
    <name evidence="6" type="primary">hyuP</name>
</gene>
<feature type="chain" id="PRO_0000439923" description="Hydantoin permease">
    <location>
        <begin position="1"/>
        <end position="489"/>
    </location>
</feature>
<feature type="transmembrane region" description="Helical; Name=1" evidence="1">
    <location>
        <begin position="30"/>
        <end position="50"/>
    </location>
</feature>
<feature type="transmembrane region" description="Helical; Name=2" evidence="1">
    <location>
        <begin position="58"/>
        <end position="78"/>
    </location>
</feature>
<feature type="transmembrane region" description="Helical; Name=3" evidence="1">
    <location>
        <begin position="104"/>
        <end position="124"/>
    </location>
</feature>
<feature type="transmembrane region" description="Helical; Name=4" evidence="1">
    <location>
        <begin position="144"/>
        <end position="164"/>
    </location>
</feature>
<feature type="transmembrane region" description="Helical; Name=5" evidence="1">
    <location>
        <begin position="167"/>
        <end position="187"/>
    </location>
</feature>
<feature type="transmembrane region" description="Helical; Name=6" evidence="1">
    <location>
        <begin position="207"/>
        <end position="227"/>
    </location>
</feature>
<feature type="transmembrane region" description="Helical; Name=7" evidence="1">
    <location>
        <begin position="258"/>
        <end position="278"/>
    </location>
</feature>
<feature type="transmembrane region" description="Helical; Name=8" evidence="1">
    <location>
        <begin position="299"/>
        <end position="321"/>
    </location>
</feature>
<feature type="transmembrane region" description="Helical; Name=9" evidence="1">
    <location>
        <begin position="339"/>
        <end position="359"/>
    </location>
</feature>
<feature type="transmembrane region" description="Helical; Name=10" evidence="1">
    <location>
        <begin position="362"/>
        <end position="382"/>
    </location>
</feature>
<feature type="transmembrane region" description="Helical; Name=11" evidence="1">
    <location>
        <begin position="405"/>
        <end position="424"/>
    </location>
</feature>
<feature type="transmembrane region" description="Helical; Name=12" evidence="1">
    <location>
        <begin position="428"/>
        <end position="445"/>
    </location>
</feature>
<feature type="region of interest" description="Disordered" evidence="2">
    <location>
        <begin position="468"/>
        <end position="489"/>
    </location>
</feature>
<feature type="compositionally biased region" description="Polar residues" evidence="2">
    <location>
        <begin position="479"/>
        <end position="489"/>
    </location>
</feature>
<feature type="binding site" evidence="12 14 15 16 17 18 19">
    <location>
        <position position="38"/>
    </location>
    <ligand>
        <name>Na(+)</name>
        <dbReference type="ChEBI" id="CHEBI:29101"/>
    </ligand>
</feature>
<feature type="binding site" evidence="12 14 15 16 17 18 19">
    <location>
        <position position="41"/>
    </location>
    <ligand>
        <name>Na(+)</name>
        <dbReference type="ChEBI" id="CHEBI:29101"/>
    </ligand>
</feature>
<feature type="binding site" evidence="5 16 17 18 19">
    <location>
        <position position="121"/>
    </location>
    <ligand>
        <name>substrate</name>
    </ligand>
</feature>
<feature type="binding site" evidence="5 16 17 18 19">
    <location>
        <position position="219"/>
    </location>
    <ligand>
        <name>substrate</name>
    </ligand>
</feature>
<feature type="binding site" evidence="12 14 15 16 17 18 19">
    <location>
        <position position="309"/>
    </location>
    <ligand>
        <name>Na(+)</name>
        <dbReference type="ChEBI" id="CHEBI:29101"/>
    </ligand>
</feature>
<feature type="binding site" evidence="12 14 15 16 17 18 19">
    <location>
        <position position="312"/>
    </location>
    <ligand>
        <name>Na(+)</name>
        <dbReference type="ChEBI" id="CHEBI:29101"/>
    </ligand>
</feature>
<feature type="binding site" evidence="12 14 15 16 17 18 19">
    <location>
        <position position="313"/>
    </location>
    <ligand>
        <name>Na(+)</name>
        <dbReference type="ChEBI" id="CHEBI:29101"/>
    </ligand>
</feature>
<feature type="binding site" evidence="5 16 17 18 19">
    <location>
        <position position="318"/>
    </location>
    <ligand>
        <name>substrate</name>
    </ligand>
</feature>
<feature type="mutagenesis site" description="Strong decrease in uptake and binding efficiency." evidence="5">
    <original>Q</original>
    <variation>F</variation>
    <location>
        <position position="42"/>
    </location>
</feature>
<feature type="mutagenesis site" description="Modest decrease in uptake and binding efficiency." evidence="5">
    <original>Q</original>
    <variation>N</variation>
    <location>
        <position position="42"/>
    </location>
</feature>
<feature type="mutagenesis site" description="Reduces dramatically the uptake efficiency." evidence="5">
    <original>W</original>
    <variation>A</variation>
    <location>
        <position position="117"/>
    </location>
</feature>
<feature type="mutagenesis site" description="Reduces moderately the uptake efficiency." evidence="5">
    <original>W</original>
    <variation>F</variation>
    <location>
        <position position="117"/>
    </location>
</feature>
<feature type="mutagenesis site" description="Partial decrease in efficiency of both binding and uptake." evidence="5">
    <original>Q</original>
    <variation>N</variation>
    <location>
        <position position="121"/>
    </location>
</feature>
<feature type="mutagenesis site" description="Reduces both binding and uptake efficiency." evidence="5">
    <original>G</original>
    <variation>I</variation>
    <variation>S</variation>
    <location>
        <position position="219"/>
    </location>
</feature>
<feature type="mutagenesis site" description="Little effect on uptake efficiency." evidence="5">
    <original>W</original>
    <variation>A</variation>
    <variation>F</variation>
    <location>
        <position position="220"/>
    </location>
</feature>
<feature type="mutagenesis site" description="Significant loss of uptake activity and a substantial reduction in binding efficiency." evidence="5">
    <original>N</original>
    <variation>A</variation>
    <location>
        <position position="318"/>
    </location>
</feature>
<feature type="strand" evidence="21">
    <location>
        <begin position="15"/>
        <end position="18"/>
    </location>
</feature>
<feature type="helix" evidence="20">
    <location>
        <begin position="22"/>
        <end position="24"/>
    </location>
</feature>
<feature type="helix" evidence="20">
    <location>
        <begin position="29"/>
        <end position="40"/>
    </location>
</feature>
<feature type="helix" evidence="20">
    <location>
        <begin position="44"/>
        <end position="52"/>
    </location>
</feature>
<feature type="turn" evidence="20">
    <location>
        <begin position="53"/>
        <end position="55"/>
    </location>
</feature>
<feature type="helix" evidence="20">
    <location>
        <begin position="58"/>
        <end position="79"/>
    </location>
</feature>
<feature type="helix" evidence="20">
    <location>
        <begin position="81"/>
        <end position="86"/>
    </location>
</feature>
<feature type="helix" evidence="20">
    <location>
        <begin position="90"/>
        <end position="93"/>
    </location>
</feature>
<feature type="turn" evidence="20">
    <location>
        <begin position="94"/>
        <end position="97"/>
    </location>
</feature>
<feature type="turn" evidence="20">
    <location>
        <begin position="100"/>
        <end position="103"/>
    </location>
</feature>
<feature type="helix" evidence="20">
    <location>
        <begin position="104"/>
        <end position="137"/>
    </location>
</feature>
<feature type="helix" evidence="20">
    <location>
        <begin position="142"/>
        <end position="157"/>
    </location>
</feature>
<feature type="helix" evidence="20">
    <location>
        <begin position="160"/>
        <end position="190"/>
    </location>
</feature>
<feature type="helix" evidence="20">
    <location>
        <begin position="194"/>
        <end position="197"/>
    </location>
</feature>
<feature type="helix" evidence="20">
    <location>
        <begin position="209"/>
        <end position="217"/>
    </location>
</feature>
<feature type="turn" evidence="20">
    <location>
        <begin position="218"/>
        <end position="220"/>
    </location>
</feature>
<feature type="helix" evidence="20">
    <location>
        <begin position="221"/>
        <end position="224"/>
    </location>
</feature>
<feature type="helix" evidence="20">
    <location>
        <begin position="225"/>
        <end position="227"/>
    </location>
</feature>
<feature type="helix" evidence="20">
    <location>
        <begin position="228"/>
        <end position="231"/>
    </location>
</feature>
<feature type="helix" evidence="20">
    <location>
        <begin position="242"/>
        <end position="278"/>
    </location>
</feature>
<feature type="helix" evidence="20">
    <location>
        <begin position="283"/>
        <end position="291"/>
    </location>
</feature>
<feature type="helix" evidence="20">
    <location>
        <begin position="296"/>
        <end position="311"/>
    </location>
</feature>
<feature type="helix" evidence="20">
    <location>
        <begin position="314"/>
        <end position="318"/>
    </location>
</feature>
<feature type="helix" evidence="20">
    <location>
        <begin position="320"/>
        <end position="329"/>
    </location>
</feature>
<feature type="turn" evidence="20">
    <location>
        <begin position="331"/>
        <end position="333"/>
    </location>
</feature>
<feature type="helix" evidence="20">
    <location>
        <begin position="336"/>
        <end position="349"/>
    </location>
</feature>
<feature type="helix" evidence="20">
    <location>
        <begin position="352"/>
        <end position="354"/>
    </location>
</feature>
<feature type="helix" evidence="20">
    <location>
        <begin position="356"/>
        <end position="368"/>
    </location>
</feature>
<feature type="helix" evidence="20">
    <location>
        <begin position="371"/>
        <end position="382"/>
    </location>
</feature>
<feature type="helix" evidence="20">
    <location>
        <begin position="391"/>
        <end position="394"/>
    </location>
</feature>
<feature type="strand" evidence="20">
    <location>
        <begin position="396"/>
        <end position="399"/>
    </location>
</feature>
<feature type="helix" evidence="20">
    <location>
        <begin position="409"/>
        <end position="423"/>
    </location>
</feature>
<feature type="helix" evidence="20">
    <location>
        <begin position="426"/>
        <end position="428"/>
    </location>
</feature>
<feature type="helix" evidence="20">
    <location>
        <begin position="429"/>
        <end position="448"/>
    </location>
</feature>
<feature type="turn" evidence="20">
    <location>
        <begin position="449"/>
        <end position="451"/>
    </location>
</feature>
<feature type="helix" evidence="20">
    <location>
        <begin position="457"/>
        <end position="461"/>
    </location>
</feature>
<feature type="helix" evidence="20">
    <location>
        <begin position="462"/>
        <end position="466"/>
    </location>
</feature>
<dbReference type="PDB" id="2JLN">
    <property type="method" value="X-ray"/>
    <property type="resolution" value="2.85 A"/>
    <property type="chains" value="A=1-488"/>
</dbReference>
<dbReference type="PDB" id="2X79">
    <property type="method" value="X-ray"/>
    <property type="resolution" value="3.80 A"/>
    <property type="chains" value="A=1-488"/>
</dbReference>
<dbReference type="PDB" id="4D1A">
    <property type="method" value="X-ray"/>
    <property type="resolution" value="3.40 A"/>
    <property type="chains" value="A=1-487"/>
</dbReference>
<dbReference type="PDB" id="4D1B">
    <property type="method" value="X-ray"/>
    <property type="resolution" value="3.80 A"/>
    <property type="chains" value="A=1-487"/>
</dbReference>
<dbReference type="PDB" id="4D1C">
    <property type="method" value="X-ray"/>
    <property type="resolution" value="3.70 A"/>
    <property type="chains" value="A=1-487"/>
</dbReference>
<dbReference type="PDB" id="4D1D">
    <property type="method" value="X-ray"/>
    <property type="resolution" value="3.70 A"/>
    <property type="chains" value="A=1-487"/>
</dbReference>
<dbReference type="PDBsum" id="2JLN"/>
<dbReference type="PDBsum" id="2X79"/>
<dbReference type="PDBsum" id="4D1A"/>
<dbReference type="PDBsum" id="4D1B"/>
<dbReference type="PDBsum" id="4D1C"/>
<dbReference type="PDBsum" id="4D1D"/>
<dbReference type="SMR" id="D6R8X8"/>
<dbReference type="TCDB" id="2.A.39.3.6">
    <property type="family name" value="the nucleobase:cation symporter-1 (ncs1) family"/>
</dbReference>
<dbReference type="EvolutionaryTrace" id="D6R8X8"/>
<dbReference type="GO" id="GO:0005886">
    <property type="term" value="C:plasma membrane"/>
    <property type="evidence" value="ECO:0007669"/>
    <property type="project" value="TreeGrafter"/>
</dbReference>
<dbReference type="GO" id="GO:0046872">
    <property type="term" value="F:metal ion binding"/>
    <property type="evidence" value="ECO:0007669"/>
    <property type="project" value="UniProtKB-KW"/>
</dbReference>
<dbReference type="GO" id="GO:0015205">
    <property type="term" value="F:nucleobase transmembrane transporter activity"/>
    <property type="evidence" value="ECO:0007669"/>
    <property type="project" value="TreeGrafter"/>
</dbReference>
<dbReference type="CDD" id="cd11483">
    <property type="entry name" value="SLC-NCS1sbd_Mhp1-like"/>
    <property type="match status" value="1"/>
</dbReference>
<dbReference type="Gene3D" id="1.10.4160.10">
    <property type="entry name" value="Hydantoin permease"/>
    <property type="match status" value="1"/>
</dbReference>
<dbReference type="InterPro" id="IPR001248">
    <property type="entry name" value="Pur-cyt_permease"/>
</dbReference>
<dbReference type="InterPro" id="IPR045225">
    <property type="entry name" value="Uracil/uridine/allantoin_perm"/>
</dbReference>
<dbReference type="PANTHER" id="PTHR30618">
    <property type="entry name" value="NCS1 FAMILY PURINE/PYRIMIDINE TRANSPORTER"/>
    <property type="match status" value="1"/>
</dbReference>
<dbReference type="PANTHER" id="PTHR30618:SF0">
    <property type="entry name" value="PURINE-URACIL PERMEASE NCS1"/>
    <property type="match status" value="1"/>
</dbReference>
<dbReference type="Pfam" id="PF02133">
    <property type="entry name" value="Transp_cyt_pur"/>
    <property type="match status" value="1"/>
</dbReference>
<comment type="function">
    <text evidence="3 5 11">Nucleobase-proton symporter that mediates the sodium-dependent binding and uptake of 5-aryl-substituted hydantoin compounds (PubMed:16621827, PubMed:24952894). 5-indolyl methyl hydantoin and 5-benzyl hydantoin are the preferred substrates, with selectivity for a hydrophobic substituent in position 5 of hydantoin and for the L isomer over the D isomer (PubMed:16621827, PubMed:24952894).</text>
</comment>
<comment type="activity regulation">
    <text evidence="3 4 5">Inhibited by dinitrophenol, 5-(2-naphthylmethyl)-D-hydantoin (D-NMH), 5-(2-naphthylmethyl)-L-hydantoin (L-NMH), 5-bromovinylhydantoin (BVH) and 5-indolylmethyl-L-hydantoin (L-IMH) (PubMed:16621827, PubMed:24952894). The affinity of benzyl-hydantoin is increased over 10-fold in the presence of 15 mM of sodium (PubMed:18927357).</text>
</comment>
<comment type="biophysicochemical properties">
    <phDependence>
        <text evidence="3">Optimum pH is 6.6.</text>
    </phDependence>
</comment>
<comment type="subcellular location">
    <subcellularLocation>
        <location evidence="3">Membrane</location>
        <topology evidence="12 13">Multi-pass membrane protein</topology>
    </subcellularLocation>
</comment>
<comment type="similarity">
    <text evidence="10">Belongs to the purine-cytosine permease (2.A.39) family.</text>
</comment>
<reference key="1">
    <citation type="journal article" date="2005" name="Biosci. Biotechnol. Biochem.">
        <title>Molecular cloning and expression of the hyu genes from Microbacterium liquefaciens AJ 3912, responsible for the conversion of 5-substituted hydantoins to alpha-amino acids, in Escherichia coli.</title>
        <authorList>
            <person name="Suzuki S."/>
            <person name="Takenaka Y."/>
            <person name="Onishi N."/>
            <person name="Yokozeki K."/>
        </authorList>
    </citation>
    <scope>NUCLEOTIDE SEQUENCE [GENOMIC DNA]</scope>
    <scope>FUNCTION</scope>
    <source>
        <strain>AJ 3912</strain>
    </source>
</reference>
<reference key="2">
    <citation type="journal article" date="2006" name="J. Bacteriol.">
        <title>The hydantoin transport protein from Microbacterium liquefaciens.</title>
        <authorList>
            <person name="Suzuki S."/>
            <person name="Henderson P.J."/>
        </authorList>
    </citation>
    <scope>PROTEIN SEQUENCE OF 1-10</scope>
    <scope>FUNCTION</scope>
    <scope>BIOPHYSICOCHEMICAL PROPERTIES</scope>
    <scope>ACTIVITY REGULATION</scope>
    <scope>SUBCELLULAR LOCATION</scope>
    <scope>SUBSTRATE SPECIFICITY</scope>
    <source>
        <strain>AJ 3912</strain>
    </source>
</reference>
<reference key="3">
    <citation type="journal article" date="2008" name="Science">
        <title>Structure and molecular mechanism of a nucleobase-cation-symport-1 family transporter.</title>
        <authorList>
            <person name="Weyand S."/>
            <person name="Shimamura T."/>
            <person name="Yajima S."/>
            <person name="Suzuki S."/>
            <person name="Mirza O."/>
            <person name="Krusong K."/>
            <person name="Carpenter E.P."/>
            <person name="Rutherford N.G."/>
            <person name="Hadden J.M."/>
            <person name="O'Reilly J."/>
            <person name="Ma P."/>
            <person name="Saidijam M."/>
            <person name="Patching S.G."/>
            <person name="Hope R.J."/>
            <person name="Norbertczak H.T."/>
            <person name="Roach P.C."/>
            <person name="Iwata S."/>
            <person name="Henderson P.J."/>
            <person name="Cameron A.D."/>
        </authorList>
    </citation>
    <scope>X-RAY CRYSTALLOGRAPHY (2.85 ANGSTROMS) OF 8-471 IN COMPLEX WITH SODIUM ION</scope>
    <scope>ACTIVITY REGULATION</scope>
    <scope>SUBCELLULAR LOCATION</scope>
</reference>
<reference key="4">
    <citation type="journal article" date="2010" name="Science">
        <title>Molecular basis of alternating access membrane transport by the sodium-hydantoin transporter Mhp1.</title>
        <authorList>
            <person name="Shimamura T."/>
            <person name="Weyand S."/>
            <person name="Beckstein O."/>
            <person name="Rutherford N.G."/>
            <person name="Hadden J.M."/>
            <person name="Sharples D."/>
            <person name="Sansom M.S."/>
            <person name="Iwata S."/>
            <person name="Henderson P.J."/>
            <person name="Cameron A.D."/>
        </authorList>
    </citation>
    <scope>X-RAY CRYSTALLOGRAPHY (3.80 ANGSTROMS) OF 6-471</scope>
    <scope>SUBCELLULAR LOCATION</scope>
</reference>
<reference key="5">
    <citation type="journal article" date="2014" name="EMBO J.">
        <title>Molecular mechanism of ligand recognition by membrane transport protein, Mhp1.</title>
        <authorList>
            <person name="Simmons K.J."/>
            <person name="Jackson S.M."/>
            <person name="Brueckner F."/>
            <person name="Patching S.G."/>
            <person name="Beckstein O."/>
            <person name="Ivanova E."/>
            <person name="Geng T."/>
            <person name="Weyand S."/>
            <person name="Drew D."/>
            <person name="Lanigan J."/>
            <person name="Sharples D.J."/>
            <person name="Sansom M.S."/>
            <person name="Iwata S."/>
            <person name="Fishwick C.W."/>
            <person name="Johnson A.P."/>
            <person name="Cameron A.D."/>
            <person name="Henderson P.J."/>
        </authorList>
    </citation>
    <scope>X-RAY CRYSTALLOGRAPHY (3.40 ANGSTROMS) OF 11-466 IN COMPLEX WITH SUBSTRATE ANALOGS AND SODIUM ION</scope>
    <scope>FUNCTION</scope>
    <scope>ACTIVITY REGULATION</scope>
    <scope>MUTAGENESIS OF GLN-42; TRP-117; GLN-121; GLY-219; TRP-220 AND ASN-318</scope>
</reference>
<protein>
    <recommendedName>
        <fullName evidence="6">Hydantoin permease</fullName>
        <shortName evidence="6">MHP</shortName>
    </recommendedName>
    <alternativeName>
        <fullName evidence="7">Hydantoin transport protein</fullName>
    </alternativeName>
    <alternativeName>
        <fullName evidence="8">NCS1 benzyl-hydantoin transporter</fullName>
    </alternativeName>
    <alternativeName>
        <fullName evidence="9">Nucleobase cation symporter 1</fullName>
        <shortName evidence="9">NCS1</shortName>
    </alternativeName>
    <alternativeName>
        <fullName evidence="9">Sodium-coupled secondary active transport protein</fullName>
    </alternativeName>
    <alternativeName>
        <fullName evidence="9">Sodium-hydantoin transporter Mhp1</fullName>
    </alternativeName>
</protein>
<keyword id="KW-0002">3D-structure</keyword>
<keyword id="KW-0903">Direct protein sequencing</keyword>
<keyword id="KW-0472">Membrane</keyword>
<keyword id="KW-0479">Metal-binding</keyword>
<keyword id="KW-0915">Sodium</keyword>
<keyword id="KW-0812">Transmembrane</keyword>
<keyword id="KW-1133">Transmembrane helix</keyword>
<keyword id="KW-0813">Transport</keyword>
<proteinExistence type="evidence at protein level"/>
<evidence type="ECO:0000255" key="1"/>
<evidence type="ECO:0000256" key="2">
    <source>
        <dbReference type="SAM" id="MobiDB-lite"/>
    </source>
</evidence>
<evidence type="ECO:0000269" key="3">
    <source>
    </source>
</evidence>
<evidence type="ECO:0000269" key="4">
    <source>
    </source>
</evidence>
<evidence type="ECO:0000269" key="5">
    <source>
    </source>
</evidence>
<evidence type="ECO:0000303" key="6">
    <source>
    </source>
</evidence>
<evidence type="ECO:0000303" key="7">
    <source>
    </source>
</evidence>
<evidence type="ECO:0000303" key="8">
    <source>
    </source>
</evidence>
<evidence type="ECO:0000303" key="9">
    <source>
    </source>
</evidence>
<evidence type="ECO:0000305" key="10"/>
<evidence type="ECO:0000305" key="11">
    <source>
    </source>
</evidence>
<evidence type="ECO:0000305" key="12">
    <source>
    </source>
</evidence>
<evidence type="ECO:0000305" key="13">
    <source>
    </source>
</evidence>
<evidence type="ECO:0000305" key="14">
    <source>
    </source>
</evidence>
<evidence type="ECO:0007744" key="15">
    <source>
        <dbReference type="PDB" id="2JLN"/>
    </source>
</evidence>
<evidence type="ECO:0007744" key="16">
    <source>
        <dbReference type="PDB" id="4D1A"/>
    </source>
</evidence>
<evidence type="ECO:0007744" key="17">
    <source>
        <dbReference type="PDB" id="4D1B"/>
    </source>
</evidence>
<evidence type="ECO:0007744" key="18">
    <source>
        <dbReference type="PDB" id="4D1C"/>
    </source>
</evidence>
<evidence type="ECO:0007744" key="19">
    <source>
        <dbReference type="PDB" id="4D1D"/>
    </source>
</evidence>
<evidence type="ECO:0007829" key="20">
    <source>
        <dbReference type="PDB" id="2JLN"/>
    </source>
</evidence>
<evidence type="ECO:0007829" key="21">
    <source>
        <dbReference type="PDB" id="4D1A"/>
    </source>
</evidence>
<organism>
    <name type="scientific">Microbacterium maritypicum</name>
    <name type="common">Microbacterium liquefaciens</name>
    <dbReference type="NCBI Taxonomy" id="33918"/>
    <lineage>
        <taxon>Bacteria</taxon>
        <taxon>Bacillati</taxon>
        <taxon>Actinomycetota</taxon>
        <taxon>Actinomycetes</taxon>
        <taxon>Micrococcales</taxon>
        <taxon>Microbacteriaceae</taxon>
        <taxon>Microbacterium</taxon>
    </lineage>
</organism>
<sequence>MNSTPIEEARSLLNPSNAPTRYAERSVGPFSLAAIWFAMAIQVAIFIAAGQMTSSFQVWQVIVAIAAGCTIAVILLFFTQSAAIRWGINFTVAARMPFGIRGSLIPITLKALLSLFWFGFQTWLGALALDEITRLLTGFTNLPLWIVIFGAIQVVTTFYGITFIRWMNVFASPVLLAMGVYMVYLMLDGADVSLGEVMSMGGENPGMPFSTAIMIFVGGWIAVVVSIHDIVKECKVDPNASREGQTKADARYATAQWLGMVPASIIFGFIGAASMVLVGEWNPVIAITEVVGGVSIPMAILFQVFVLLATWSTNPAANLLSPAYTLCSTFPRVFTFKTGVIVSAVVGLLMMPWQFAGVLNTFLNLLASALGPLAGIMISDYFLVRRRRISLHDLYRTKGIYTYWRGVNWVALAVYAVALAVSFLTPDLMFVTGLIAALLLHIPAMRWVAKTFPLFSEAESRNEDYLRPIGPVAPADESATANTKEQNQR</sequence>
<accession>D6R8X8</accession>
<name>HYUP_MICMQ</name>